<protein>
    <recommendedName>
        <fullName evidence="1">Ribonuclease H</fullName>
        <shortName evidence="1">RNase H</shortName>
        <ecNumber evidence="1">3.1.26.4</ecNumber>
    </recommendedName>
</protein>
<gene>
    <name evidence="1" type="primary">rnhA</name>
    <name type="ordered locus">SG0591</name>
</gene>
<proteinExistence type="inferred from homology"/>
<sequence>MRKQVAIFTDGSCLGNPGPGGYGAILRYKQHEKTFSAGYRLTTNNRMELMAAIVALEALTDACEVVLSTDSQYVRQGITQWIHNWKKRGWKTAYKKPVKNVDLWQRLDAAIQPHTLRWDWVKGHSGHPENERCDELARTAACHPALEDIGYRVEAQTSGGRAD</sequence>
<dbReference type="EC" id="3.1.26.4" evidence="1"/>
<dbReference type="EMBL" id="AP008232">
    <property type="protein sequence ID" value="BAE73866.1"/>
    <property type="molecule type" value="Genomic_DNA"/>
</dbReference>
<dbReference type="RefSeq" id="WP_011410344.1">
    <property type="nucleotide sequence ID" value="NC_007712.1"/>
</dbReference>
<dbReference type="SMR" id="Q2NVF9"/>
<dbReference type="STRING" id="343509.SG0591"/>
<dbReference type="KEGG" id="sgl:SG0591"/>
<dbReference type="eggNOG" id="COG0328">
    <property type="taxonomic scope" value="Bacteria"/>
</dbReference>
<dbReference type="HOGENOM" id="CLU_030894_6_0_6"/>
<dbReference type="OrthoDB" id="7845843at2"/>
<dbReference type="BioCyc" id="SGLO343509:SGP1_RS05075-MONOMER"/>
<dbReference type="Proteomes" id="UP000001932">
    <property type="component" value="Chromosome"/>
</dbReference>
<dbReference type="GO" id="GO:0005737">
    <property type="term" value="C:cytoplasm"/>
    <property type="evidence" value="ECO:0007669"/>
    <property type="project" value="UniProtKB-SubCell"/>
</dbReference>
<dbReference type="GO" id="GO:0000287">
    <property type="term" value="F:magnesium ion binding"/>
    <property type="evidence" value="ECO:0007669"/>
    <property type="project" value="UniProtKB-UniRule"/>
</dbReference>
<dbReference type="GO" id="GO:0003676">
    <property type="term" value="F:nucleic acid binding"/>
    <property type="evidence" value="ECO:0007669"/>
    <property type="project" value="InterPro"/>
</dbReference>
<dbReference type="GO" id="GO:0004523">
    <property type="term" value="F:RNA-DNA hybrid ribonuclease activity"/>
    <property type="evidence" value="ECO:0007669"/>
    <property type="project" value="UniProtKB-UniRule"/>
</dbReference>
<dbReference type="GO" id="GO:0043137">
    <property type="term" value="P:DNA replication, removal of RNA primer"/>
    <property type="evidence" value="ECO:0007669"/>
    <property type="project" value="TreeGrafter"/>
</dbReference>
<dbReference type="CDD" id="cd09278">
    <property type="entry name" value="RNase_HI_prokaryote_like"/>
    <property type="match status" value="1"/>
</dbReference>
<dbReference type="FunFam" id="3.30.420.10:FF:000008">
    <property type="entry name" value="Ribonuclease H"/>
    <property type="match status" value="1"/>
</dbReference>
<dbReference type="Gene3D" id="3.30.420.10">
    <property type="entry name" value="Ribonuclease H-like superfamily/Ribonuclease H"/>
    <property type="match status" value="1"/>
</dbReference>
<dbReference type="HAMAP" id="MF_00042">
    <property type="entry name" value="RNase_H"/>
    <property type="match status" value="1"/>
</dbReference>
<dbReference type="InterPro" id="IPR050092">
    <property type="entry name" value="RNase_H"/>
</dbReference>
<dbReference type="InterPro" id="IPR012337">
    <property type="entry name" value="RNaseH-like_sf"/>
</dbReference>
<dbReference type="InterPro" id="IPR002156">
    <property type="entry name" value="RNaseH_domain"/>
</dbReference>
<dbReference type="InterPro" id="IPR036397">
    <property type="entry name" value="RNaseH_sf"/>
</dbReference>
<dbReference type="InterPro" id="IPR022892">
    <property type="entry name" value="RNaseHI"/>
</dbReference>
<dbReference type="NCBIfam" id="NF001236">
    <property type="entry name" value="PRK00203.1"/>
    <property type="match status" value="1"/>
</dbReference>
<dbReference type="PANTHER" id="PTHR10642">
    <property type="entry name" value="RIBONUCLEASE H1"/>
    <property type="match status" value="1"/>
</dbReference>
<dbReference type="PANTHER" id="PTHR10642:SF26">
    <property type="entry name" value="RIBONUCLEASE H1"/>
    <property type="match status" value="1"/>
</dbReference>
<dbReference type="Pfam" id="PF00075">
    <property type="entry name" value="RNase_H"/>
    <property type="match status" value="1"/>
</dbReference>
<dbReference type="SUPFAM" id="SSF53098">
    <property type="entry name" value="Ribonuclease H-like"/>
    <property type="match status" value="1"/>
</dbReference>
<dbReference type="PROSITE" id="PS50879">
    <property type="entry name" value="RNASE_H_1"/>
    <property type="match status" value="1"/>
</dbReference>
<name>RNH_SODGM</name>
<reference key="1">
    <citation type="journal article" date="2006" name="Genome Res.">
        <title>Massive genome erosion and functional adaptations provide insights into the symbiotic lifestyle of Sodalis glossinidius in the tsetse host.</title>
        <authorList>
            <person name="Toh H."/>
            <person name="Weiss B.L."/>
            <person name="Perkin S.A.H."/>
            <person name="Yamashita A."/>
            <person name="Oshima K."/>
            <person name="Hattori M."/>
            <person name="Aksoy S."/>
        </authorList>
    </citation>
    <scope>NUCLEOTIDE SEQUENCE [LARGE SCALE GENOMIC DNA]</scope>
    <source>
        <strain>morsitans</strain>
    </source>
</reference>
<evidence type="ECO:0000255" key="1">
    <source>
        <dbReference type="HAMAP-Rule" id="MF_00042"/>
    </source>
</evidence>
<evidence type="ECO:0000255" key="2">
    <source>
        <dbReference type="PROSITE-ProRule" id="PRU00408"/>
    </source>
</evidence>
<feature type="chain" id="PRO_1000074680" description="Ribonuclease H">
    <location>
        <begin position="1"/>
        <end position="163"/>
    </location>
</feature>
<feature type="domain" description="RNase H type-1" evidence="2">
    <location>
        <begin position="1"/>
        <end position="142"/>
    </location>
</feature>
<feature type="binding site" evidence="1">
    <location>
        <position position="10"/>
    </location>
    <ligand>
        <name>Mg(2+)</name>
        <dbReference type="ChEBI" id="CHEBI:18420"/>
        <label>1</label>
    </ligand>
</feature>
<feature type="binding site" evidence="1">
    <location>
        <position position="10"/>
    </location>
    <ligand>
        <name>Mg(2+)</name>
        <dbReference type="ChEBI" id="CHEBI:18420"/>
        <label>2</label>
    </ligand>
</feature>
<feature type="binding site" evidence="1">
    <location>
        <position position="48"/>
    </location>
    <ligand>
        <name>Mg(2+)</name>
        <dbReference type="ChEBI" id="CHEBI:18420"/>
        <label>1</label>
    </ligand>
</feature>
<feature type="binding site" evidence="1">
    <location>
        <position position="70"/>
    </location>
    <ligand>
        <name>Mg(2+)</name>
        <dbReference type="ChEBI" id="CHEBI:18420"/>
        <label>1</label>
    </ligand>
</feature>
<feature type="binding site" evidence="1">
    <location>
        <position position="134"/>
    </location>
    <ligand>
        <name>Mg(2+)</name>
        <dbReference type="ChEBI" id="CHEBI:18420"/>
        <label>2</label>
    </ligand>
</feature>
<comment type="function">
    <text evidence="1">Endonuclease that specifically degrades the RNA of RNA-DNA hybrids.</text>
</comment>
<comment type="catalytic activity">
    <reaction evidence="1">
        <text>Endonucleolytic cleavage to 5'-phosphomonoester.</text>
        <dbReference type="EC" id="3.1.26.4"/>
    </reaction>
</comment>
<comment type="cofactor">
    <cofactor evidence="1">
        <name>Mg(2+)</name>
        <dbReference type="ChEBI" id="CHEBI:18420"/>
    </cofactor>
    <text evidence="1">Binds 1 Mg(2+) ion per subunit. May bind a second metal ion at a regulatory site, or after substrate binding.</text>
</comment>
<comment type="subunit">
    <text evidence="1">Monomer.</text>
</comment>
<comment type="subcellular location">
    <subcellularLocation>
        <location evidence="1">Cytoplasm</location>
    </subcellularLocation>
</comment>
<comment type="similarity">
    <text evidence="1">Belongs to the RNase H family.</text>
</comment>
<organism>
    <name type="scientific">Sodalis glossinidius (strain morsitans)</name>
    <dbReference type="NCBI Taxonomy" id="343509"/>
    <lineage>
        <taxon>Bacteria</taxon>
        <taxon>Pseudomonadati</taxon>
        <taxon>Pseudomonadota</taxon>
        <taxon>Gammaproteobacteria</taxon>
        <taxon>Enterobacterales</taxon>
        <taxon>Bruguierivoracaceae</taxon>
        <taxon>Sodalis</taxon>
    </lineage>
</organism>
<keyword id="KW-0963">Cytoplasm</keyword>
<keyword id="KW-0255">Endonuclease</keyword>
<keyword id="KW-0378">Hydrolase</keyword>
<keyword id="KW-0460">Magnesium</keyword>
<keyword id="KW-0479">Metal-binding</keyword>
<keyword id="KW-0540">Nuclease</keyword>
<accession>Q2NVF9</accession>